<proteinExistence type="inferred from homology"/>
<keyword id="KW-0342">GTP-binding</keyword>
<keyword id="KW-0547">Nucleotide-binding</keyword>
<keyword id="KW-0548">Nucleotidyltransferase</keyword>
<keyword id="KW-1185">Reference proteome</keyword>
<keyword id="KW-0808">Transferase</keyword>
<dbReference type="EC" id="2.7.7.68" evidence="1"/>
<dbReference type="EMBL" id="CP000254">
    <property type="protein sequence ID" value="ABD40998.1"/>
    <property type="molecule type" value="Genomic_DNA"/>
</dbReference>
<dbReference type="RefSeq" id="WP_011448275.1">
    <property type="nucleotide sequence ID" value="NC_007796.1"/>
</dbReference>
<dbReference type="SMR" id="Q2FQJ1"/>
<dbReference type="FunCoup" id="Q2FQJ1">
    <property type="interactions" value="88"/>
</dbReference>
<dbReference type="STRING" id="323259.Mhun_1254"/>
<dbReference type="EnsemblBacteria" id="ABD40998">
    <property type="protein sequence ID" value="ABD40998"/>
    <property type="gene ID" value="Mhun_1254"/>
</dbReference>
<dbReference type="GeneID" id="3924196"/>
<dbReference type="KEGG" id="mhu:Mhun_1254"/>
<dbReference type="eggNOG" id="arCOG04472">
    <property type="taxonomic scope" value="Archaea"/>
</dbReference>
<dbReference type="HOGENOM" id="CLU_076569_2_0_2"/>
<dbReference type="InParanoid" id="Q2FQJ1"/>
<dbReference type="OrthoDB" id="11179at2157"/>
<dbReference type="UniPathway" id="UPA00071"/>
<dbReference type="Proteomes" id="UP000001941">
    <property type="component" value="Chromosome"/>
</dbReference>
<dbReference type="GO" id="GO:0005525">
    <property type="term" value="F:GTP binding"/>
    <property type="evidence" value="ECO:0007669"/>
    <property type="project" value="UniProtKB-KW"/>
</dbReference>
<dbReference type="GO" id="GO:0043814">
    <property type="term" value="F:phospholactate guanylyltransferase activity"/>
    <property type="evidence" value="ECO:0007669"/>
    <property type="project" value="UniProtKB-EC"/>
</dbReference>
<dbReference type="GO" id="GO:0052645">
    <property type="term" value="P:F420-0 metabolic process"/>
    <property type="evidence" value="ECO:0007669"/>
    <property type="project" value="UniProtKB-UniRule"/>
</dbReference>
<dbReference type="Gene3D" id="6.10.140.50">
    <property type="match status" value="1"/>
</dbReference>
<dbReference type="Gene3D" id="3.90.550.10">
    <property type="entry name" value="Spore Coat Polysaccharide Biosynthesis Protein SpsA, Chain A"/>
    <property type="match status" value="1"/>
</dbReference>
<dbReference type="HAMAP" id="MF_02114">
    <property type="entry name" value="CofC"/>
    <property type="match status" value="1"/>
</dbReference>
<dbReference type="InterPro" id="IPR002835">
    <property type="entry name" value="CofC"/>
</dbReference>
<dbReference type="InterPro" id="IPR029044">
    <property type="entry name" value="Nucleotide-diphossugar_trans"/>
</dbReference>
<dbReference type="NCBIfam" id="TIGR03552">
    <property type="entry name" value="F420_cofC"/>
    <property type="match status" value="1"/>
</dbReference>
<dbReference type="PANTHER" id="PTHR40392">
    <property type="entry name" value="2-PHOSPHO-L-LACTATE GUANYLYLTRANSFERASE"/>
    <property type="match status" value="1"/>
</dbReference>
<dbReference type="PANTHER" id="PTHR40392:SF1">
    <property type="entry name" value="2-PHOSPHO-L-LACTATE GUANYLYLTRANSFERASE"/>
    <property type="match status" value="1"/>
</dbReference>
<dbReference type="Pfam" id="PF01983">
    <property type="entry name" value="CofC"/>
    <property type="match status" value="1"/>
</dbReference>
<dbReference type="SUPFAM" id="SSF53448">
    <property type="entry name" value="Nucleotide-diphospho-sugar transferases"/>
    <property type="match status" value="1"/>
</dbReference>
<sequence>MVTFVSEMRIPVVIPYKPIQPKTRLSCILTDEEREDFAFMMLRDVVNAVKNAGCSPLILATAPVELDDVPVRILEEGLNETINGFCEGNDEPLAIVMADLALADRSAILTLLTSGGDLAIAPGRGGGTNAIYVRSAKMFQAQYYGMSYEKHVRYGTDAGLMVKIIDSFRLYCDIDEQDDLIEVFIHNTGYSREWLISHGFEIAMKKSRIGVKRPGYE</sequence>
<name>COFC_METHJ</name>
<organism>
    <name type="scientific">Methanospirillum hungatei JF-1 (strain ATCC 27890 / DSM 864 / NBRC 100397 / JF-1)</name>
    <dbReference type="NCBI Taxonomy" id="323259"/>
    <lineage>
        <taxon>Archaea</taxon>
        <taxon>Methanobacteriati</taxon>
        <taxon>Methanobacteriota</taxon>
        <taxon>Stenosarchaea group</taxon>
        <taxon>Methanomicrobia</taxon>
        <taxon>Methanomicrobiales</taxon>
        <taxon>Methanospirillaceae</taxon>
        <taxon>Methanospirillum</taxon>
    </lineage>
</organism>
<feature type="chain" id="PRO_0000398760" description="2-phospho-L-lactate guanylyltransferase">
    <location>
        <begin position="1"/>
        <end position="217"/>
    </location>
</feature>
<gene>
    <name evidence="1" type="primary">cofC</name>
    <name type="ordered locus">Mhun_1254</name>
</gene>
<comment type="function">
    <text evidence="1">Guanylyltransferase that catalyzes the activation of (2S)-2-phospholactate (2-PL) as (2S)-lactyl-2-diphospho-5'-guanosine, via the condensation of 2-PL with GTP. It is involved in the biosynthesis of coenzyme F420, a hydride carrier cofactor.</text>
</comment>
<comment type="catalytic activity">
    <reaction evidence="1">
        <text>(2S)-2-phospholactate + GTP + H(+) = (2S)-lactyl-2-diphospho-5'-guanosine + diphosphate</text>
        <dbReference type="Rhea" id="RHEA:63424"/>
        <dbReference type="ChEBI" id="CHEBI:15378"/>
        <dbReference type="ChEBI" id="CHEBI:33019"/>
        <dbReference type="ChEBI" id="CHEBI:37565"/>
        <dbReference type="ChEBI" id="CHEBI:59435"/>
        <dbReference type="ChEBI" id="CHEBI:59906"/>
        <dbReference type="EC" id="2.7.7.68"/>
    </reaction>
</comment>
<comment type="pathway">
    <text evidence="1">Cofactor biosynthesis; coenzyme F420 biosynthesis.</text>
</comment>
<comment type="subunit">
    <text evidence="1">Homodimer.</text>
</comment>
<comment type="similarity">
    <text evidence="1">Belongs to the CofC family.</text>
</comment>
<reference key="1">
    <citation type="journal article" date="2016" name="Stand. Genomic Sci.">
        <title>Complete genome sequence of Methanospirillum hungatei type strain JF1.</title>
        <authorList>
            <person name="Gunsalus R.P."/>
            <person name="Cook L.E."/>
            <person name="Crable B."/>
            <person name="Rohlin L."/>
            <person name="McDonald E."/>
            <person name="Mouttaki H."/>
            <person name="Sieber J.R."/>
            <person name="Poweleit N."/>
            <person name="Zhou H."/>
            <person name="Lapidus A.L."/>
            <person name="Daligault H.E."/>
            <person name="Land M."/>
            <person name="Gilna P."/>
            <person name="Ivanova N."/>
            <person name="Kyrpides N."/>
            <person name="Culley D.E."/>
            <person name="McInerney M.J."/>
        </authorList>
    </citation>
    <scope>NUCLEOTIDE SEQUENCE [LARGE SCALE GENOMIC DNA]</scope>
    <source>
        <strain>ATCC 27890 / DSM 864 / NBRC 100397 / JF-1</strain>
    </source>
</reference>
<protein>
    <recommendedName>
        <fullName evidence="1">2-phospho-L-lactate guanylyltransferase</fullName>
        <shortName evidence="1">LP guanylyltransferase</shortName>
        <ecNumber evidence="1">2.7.7.68</ecNumber>
    </recommendedName>
</protein>
<accession>Q2FQJ1</accession>
<evidence type="ECO:0000255" key="1">
    <source>
        <dbReference type="HAMAP-Rule" id="MF_02114"/>
    </source>
</evidence>